<name>RP132_VACCW</name>
<organismHost>
    <name type="scientific">Bos taurus</name>
    <name type="common">Bovine</name>
    <dbReference type="NCBI Taxonomy" id="9913"/>
</organismHost>
<evidence type="ECO:0000269" key="1">
    <source>
    </source>
</evidence>
<evidence type="ECO:0000305" key="2"/>
<evidence type="ECO:0007744" key="3">
    <source>
        <dbReference type="PDB" id="6RIE"/>
    </source>
</evidence>
<evidence type="ECO:0007829" key="4">
    <source>
        <dbReference type="PDB" id="6RIE"/>
    </source>
</evidence>
<gene>
    <name type="primary">OPG151</name>
    <name type="synonym">RPO132</name>
    <name type="ordered locus">VACWR144</name>
    <name type="ORF">A24R</name>
</gene>
<dbReference type="EC" id="2.7.7.6"/>
<dbReference type="EMBL" id="M37415">
    <property type="protein sequence ID" value="AAA72882.1"/>
    <property type="molecule type" value="Genomic_DNA"/>
</dbReference>
<dbReference type="EMBL" id="AY243312">
    <property type="protein sequence ID" value="AAO89423.1"/>
    <property type="molecule type" value="Genomic_DNA"/>
</dbReference>
<dbReference type="PIR" id="H42519">
    <property type="entry name" value="RNVZ8T"/>
</dbReference>
<dbReference type="RefSeq" id="YP_233026.1">
    <property type="nucleotide sequence ID" value="NC_006998.1"/>
</dbReference>
<dbReference type="PDB" id="6RIE">
    <property type="method" value="EM"/>
    <property type="resolution" value="3.10 A"/>
    <property type="chains" value="B=1-1164"/>
</dbReference>
<dbReference type="PDB" id="8C8H">
    <property type="method" value="EM"/>
    <property type="resolution" value="3.84 A"/>
    <property type="chains" value="B=1-1164"/>
</dbReference>
<dbReference type="PDBsum" id="6RIE"/>
<dbReference type="PDBsum" id="8C8H"/>
<dbReference type="EMDB" id="EMD-16476"/>
<dbReference type="SMR" id="Q76ZP7"/>
<dbReference type="DNASU" id="3707674"/>
<dbReference type="GeneID" id="3707674"/>
<dbReference type="KEGG" id="vg:3707674"/>
<dbReference type="Proteomes" id="UP000000344">
    <property type="component" value="Genome"/>
</dbReference>
<dbReference type="GO" id="GO:0000428">
    <property type="term" value="C:DNA-directed RNA polymerase complex"/>
    <property type="evidence" value="ECO:0007669"/>
    <property type="project" value="UniProtKB-KW"/>
</dbReference>
<dbReference type="GO" id="GO:0044423">
    <property type="term" value="C:virion component"/>
    <property type="evidence" value="ECO:0007669"/>
    <property type="project" value="UniProtKB-KW"/>
</dbReference>
<dbReference type="GO" id="GO:0003677">
    <property type="term" value="F:DNA binding"/>
    <property type="evidence" value="ECO:0007669"/>
    <property type="project" value="InterPro"/>
</dbReference>
<dbReference type="GO" id="GO:0003899">
    <property type="term" value="F:DNA-directed RNA polymerase activity"/>
    <property type="evidence" value="ECO:0007669"/>
    <property type="project" value="UniProtKB-EC"/>
</dbReference>
<dbReference type="GO" id="GO:0046872">
    <property type="term" value="F:metal ion binding"/>
    <property type="evidence" value="ECO:0007669"/>
    <property type="project" value="UniProtKB-KW"/>
</dbReference>
<dbReference type="GO" id="GO:0032549">
    <property type="term" value="F:ribonucleoside binding"/>
    <property type="evidence" value="ECO:0007669"/>
    <property type="project" value="InterPro"/>
</dbReference>
<dbReference type="GO" id="GO:0006351">
    <property type="term" value="P:DNA-templated transcription"/>
    <property type="evidence" value="ECO:0007669"/>
    <property type="project" value="InterPro"/>
</dbReference>
<dbReference type="Gene3D" id="2.40.50.150">
    <property type="match status" value="1"/>
</dbReference>
<dbReference type="Gene3D" id="3.90.1100.10">
    <property type="match status" value="2"/>
</dbReference>
<dbReference type="Gene3D" id="2.40.270.10">
    <property type="entry name" value="DNA-directed RNA polymerase, subunit 2, domain 6"/>
    <property type="match status" value="1"/>
</dbReference>
<dbReference type="Gene3D" id="3.90.1800.10">
    <property type="entry name" value="RNA polymerase alpha subunit dimerisation domain"/>
    <property type="match status" value="1"/>
</dbReference>
<dbReference type="InterPro" id="IPR015712">
    <property type="entry name" value="DNA-dir_RNA_pol_su2"/>
</dbReference>
<dbReference type="InterPro" id="IPR007120">
    <property type="entry name" value="DNA-dir_RNAP_su2_dom"/>
</dbReference>
<dbReference type="InterPro" id="IPR037033">
    <property type="entry name" value="DNA-dir_RNAP_su2_hyb_sf"/>
</dbReference>
<dbReference type="InterPro" id="IPR024390">
    <property type="entry name" value="RNA_pol_132_poxvirus"/>
</dbReference>
<dbReference type="InterPro" id="IPR007121">
    <property type="entry name" value="RNA_pol_bsu_CS"/>
</dbReference>
<dbReference type="InterPro" id="IPR007645">
    <property type="entry name" value="RNA_pol_Rpb2_3"/>
</dbReference>
<dbReference type="InterPro" id="IPR007647">
    <property type="entry name" value="RNA_pol_Rpb2_5"/>
</dbReference>
<dbReference type="InterPro" id="IPR007641">
    <property type="entry name" value="RNA_pol_Rpb2_7"/>
</dbReference>
<dbReference type="InterPro" id="IPR014724">
    <property type="entry name" value="RNA_pol_RPB2_OB-fold"/>
</dbReference>
<dbReference type="PANTHER" id="PTHR20856">
    <property type="entry name" value="DNA-DIRECTED RNA POLYMERASE I SUBUNIT 2"/>
    <property type="match status" value="1"/>
</dbReference>
<dbReference type="Pfam" id="PF04565">
    <property type="entry name" value="RNA_pol_Rpb2_3"/>
    <property type="match status" value="1"/>
</dbReference>
<dbReference type="Pfam" id="PF04567">
    <property type="entry name" value="RNA_pol_Rpb2_5"/>
    <property type="match status" value="1"/>
</dbReference>
<dbReference type="Pfam" id="PF00562">
    <property type="entry name" value="RNA_pol_Rpb2_6"/>
    <property type="match status" value="1"/>
</dbReference>
<dbReference type="Pfam" id="PF04560">
    <property type="entry name" value="RNA_pol_Rpb2_7"/>
    <property type="match status" value="1"/>
</dbReference>
<dbReference type="Pfam" id="PF12415">
    <property type="entry name" value="rpo132"/>
    <property type="match status" value="1"/>
</dbReference>
<dbReference type="SUPFAM" id="SSF64484">
    <property type="entry name" value="beta and beta-prime subunits of DNA dependent RNA-polymerase"/>
    <property type="match status" value="1"/>
</dbReference>
<dbReference type="PROSITE" id="PS01166">
    <property type="entry name" value="RNA_POL_BETA"/>
    <property type="match status" value="1"/>
</dbReference>
<sequence>MKKNTDSEMDQRLGYKFLVPDPKAGVFYRPLHFQYVSYSNFILHRLHEILTVKRPLLSFKNNTERIMIEISNVKVTPPDYSPIIASIKGKSYDALATFTVNIFKEVMTKEGISITKISSYEGKDSHLIKIPLLIGYGNKNPLDTAKYLVPNVIGGVFINKQSVEKVGINLVEKITTWPKFRVVKPNSFTFSFSSVSPPNVLPTRYRHYKISLDISQLEALNISSTKTFITVNIVLLSQYLSRVSLEFIRRSLSYDMPPEVVYLVNAIIDSAKRITESITDFNIDTYINDLVEAEHIKQKSQLTINEFKYEMLHNFLPHMNYTPDQLKGFYMISLLRKFLYCIYHTSRYPDRDSMVCHRILTYGKYFETLAHDELENYIGNIRNDIMNNHKNRGTYAVNIHVLTTPGLNHAFSSLLSGKFKKSDGSYRTHPHYSWMQNISIPRSVGFYPDQVKISKMFSVRKYHPSQYLYFCSSDVPERGPQVGLVSQLSVLSSITNILTSEYLDLEKKICEYIRSYYKDDISYFETGFPITIENALVASLNPNMICDFVTDFRRRKRMGFFGNLEVGITLVRDHMNEIRINIGAGRLVRPFLVVDNGELMMDVCPELESRLDDMTFSDIQKEFPHVIEMVDIEQFTFSNVCESVQKFRMMSKDERKQYDLCDFPAEFRDGYVASSLVGINHNSGPRAILGCAQAKQAISCLSSDIRNKIDNGIHLMYPERPIVISKALETSKIAANCFGQHVTIALMSYKGINQEDGIIIKKQFIQRGGLDIVTAKKHQVEIPLENFNNKERDRSNAYSKLESNGLVRLNAFLESGDAMARNISSRTLEDDFARDNQISFDVSEKYTDMYKSRVERVQVELTDKVKVRVLTMKERRPILGDKFTTRTSQKGTVAYVADETELPYDENGITPDVIINSTSIFSRKTISMLIEVILTAAYSAKPYNNKGENRPVCFPSSNETSIDTYMQFAKQCYEHSNPKLSDEELSDKIFCEKILYDPETDKPYASKVFFGPIYYLRLRHLTQDKATVRCRGKKTKLIRQANEGRKRGGGIKFGEMERDCLIAHGAANTITEVLKDSEEDYQDVYVCENCGDIAAQIKGINTCLRCSKLNLSPLLTKIDTTHVSKVFLTQMNARGVKVKLDFERRPPSFYKPLDKVDLKPSFLV</sequence>
<organism>
    <name type="scientific">Vaccinia virus (strain Western Reserve)</name>
    <name type="common">VACV</name>
    <name type="synonym">Vaccinia virus (strain WR)</name>
    <dbReference type="NCBI Taxonomy" id="10254"/>
    <lineage>
        <taxon>Viruses</taxon>
        <taxon>Varidnaviria</taxon>
        <taxon>Bamfordvirae</taxon>
        <taxon>Nucleocytoviricota</taxon>
        <taxon>Pokkesviricetes</taxon>
        <taxon>Chitovirales</taxon>
        <taxon>Poxviridae</taxon>
        <taxon>Chordopoxvirinae</taxon>
        <taxon>Orthopoxvirus</taxon>
        <taxon>Vaccinia virus</taxon>
    </lineage>
</organism>
<comment type="function">
    <text evidence="1">Part of the DNA-dependent RNA polymerase which catalyzes the transcription of viral DNA into RNA using the four ribonucleoside triphosphates as substrates. Responsible for the transcription of early, intermediate and late genes. DNA-dependent RNA polymerase associates with the early transcription factor (ETF), itself composed of OPG118 and OPG133, thereby allowing the early genes transcription. Late transcription, and probably also intermediate transcription, require newly synthesized RNA polymerase.</text>
</comment>
<comment type="catalytic activity">
    <reaction>
        <text>RNA(n) + a ribonucleoside 5'-triphosphate = RNA(n+1) + diphosphate</text>
        <dbReference type="Rhea" id="RHEA:21248"/>
        <dbReference type="Rhea" id="RHEA-COMP:14527"/>
        <dbReference type="Rhea" id="RHEA-COMP:17342"/>
        <dbReference type="ChEBI" id="CHEBI:33019"/>
        <dbReference type="ChEBI" id="CHEBI:61557"/>
        <dbReference type="ChEBI" id="CHEBI:140395"/>
        <dbReference type="EC" id="2.7.7.6"/>
    </reaction>
</comment>
<comment type="subunit">
    <text evidence="1">The DNA-dependent RNA polymerase used for intermediate and late genes expression consists of eight subunits 147 kDa, 133 kDa, 35 kDa, 30 kDa, 22 kDa, 19 kDa, 18 kDa and 7 kDa totalling more than 500 kDa in mass. The same holoenzyme, with the addition of the transcription-specificity factor RAP94, is used for early gene expression.</text>
</comment>
<comment type="subcellular location">
    <subcellularLocation>
        <location evidence="2">Virion</location>
    </subcellularLocation>
    <text>All the enzymes and other proteins required to synthesize early mRNAs are packaged within the virion core along with the DNA genome. This is necessary because viral early mRNAs are synthesized within minutes after virus entry into the cell and are extruded through pores in the core particle.</text>
</comment>
<comment type="similarity">
    <text evidence="2">Belongs to the RNA polymerase beta chain family.</text>
</comment>
<feature type="chain" id="PRO_0000048061" description="DNA-directed RNA polymerase 133 kDa polypeptide">
    <location>
        <begin position="1"/>
        <end position="1164"/>
    </location>
</feature>
<feature type="helix" evidence="4">
    <location>
        <begin position="9"/>
        <end position="18"/>
    </location>
</feature>
<feature type="turn" evidence="4">
    <location>
        <begin position="22"/>
        <end position="25"/>
    </location>
</feature>
<feature type="strand" evidence="4">
    <location>
        <begin position="26"/>
        <end position="29"/>
    </location>
</feature>
<feature type="helix" evidence="4">
    <location>
        <begin position="32"/>
        <end position="41"/>
    </location>
</feature>
<feature type="turn" evidence="4">
    <location>
        <begin position="42"/>
        <end position="44"/>
    </location>
</feature>
<feature type="helix" evidence="4">
    <location>
        <begin position="45"/>
        <end position="50"/>
    </location>
</feature>
<feature type="strand" evidence="4">
    <location>
        <begin position="55"/>
        <end position="59"/>
    </location>
</feature>
<feature type="turn" evidence="4">
    <location>
        <begin position="60"/>
        <end position="63"/>
    </location>
</feature>
<feature type="strand" evidence="4">
    <location>
        <begin position="64"/>
        <end position="76"/>
    </location>
</feature>
<feature type="helix" evidence="4">
    <location>
        <begin position="82"/>
        <end position="87"/>
    </location>
</feature>
<feature type="strand" evidence="4">
    <location>
        <begin position="93"/>
        <end position="106"/>
    </location>
</feature>
<feature type="strand" evidence="4">
    <location>
        <begin position="113"/>
        <end position="121"/>
    </location>
</feature>
<feature type="strand" evidence="4">
    <location>
        <begin position="128"/>
        <end position="131"/>
    </location>
</feature>
<feature type="strand" evidence="4">
    <location>
        <begin position="164"/>
        <end position="167"/>
    </location>
</feature>
<feature type="strand" evidence="4">
    <location>
        <begin position="169"/>
        <end position="171"/>
    </location>
</feature>
<feature type="strand" evidence="4">
    <location>
        <begin position="179"/>
        <end position="184"/>
    </location>
</feature>
<feature type="strand" evidence="4">
    <location>
        <begin position="187"/>
        <end position="195"/>
    </location>
</feature>
<feature type="strand" evidence="4">
    <location>
        <begin position="200"/>
        <end position="202"/>
    </location>
</feature>
<feature type="strand" evidence="4">
    <location>
        <begin position="205"/>
        <end position="215"/>
    </location>
</feature>
<feature type="strand" evidence="4">
    <location>
        <begin position="225"/>
        <end position="228"/>
    </location>
</feature>
<feature type="helix" evidence="4">
    <location>
        <begin position="233"/>
        <end position="241"/>
    </location>
</feature>
<feature type="helix" evidence="4">
    <location>
        <begin position="245"/>
        <end position="252"/>
    </location>
</feature>
<feature type="helix" evidence="4">
    <location>
        <begin position="258"/>
        <end position="275"/>
    </location>
</feature>
<feature type="strand" evidence="4">
    <location>
        <begin position="277"/>
        <end position="280"/>
    </location>
</feature>
<feature type="helix" evidence="4">
    <location>
        <begin position="283"/>
        <end position="297"/>
    </location>
</feature>
<feature type="helix" evidence="4">
    <location>
        <begin position="304"/>
        <end position="312"/>
    </location>
</feature>
<feature type="strand" evidence="4">
    <location>
        <begin position="313"/>
        <end position="316"/>
    </location>
</feature>
<feature type="helix" evidence="4">
    <location>
        <begin position="317"/>
        <end position="319"/>
    </location>
</feature>
<feature type="helix" evidence="4">
    <location>
        <begin position="324"/>
        <end position="343"/>
    </location>
</feature>
<feature type="strand" evidence="4">
    <location>
        <begin position="353"/>
        <end position="356"/>
    </location>
</feature>
<feature type="helix" evidence="4">
    <location>
        <begin position="362"/>
        <end position="391"/>
    </location>
</feature>
<feature type="turn" evidence="4">
    <location>
        <begin position="400"/>
        <end position="402"/>
    </location>
</feature>
<feature type="helix" evidence="4">
    <location>
        <begin position="407"/>
        <end position="412"/>
    </location>
</feature>
<feature type="turn" evidence="4">
    <location>
        <begin position="413"/>
        <end position="417"/>
    </location>
</feature>
<feature type="strand" evidence="4">
    <location>
        <begin position="420"/>
        <end position="422"/>
    </location>
</feature>
<feature type="strand" evidence="4">
    <location>
        <begin position="426"/>
        <end position="428"/>
    </location>
</feature>
<feature type="helix" evidence="4">
    <location>
        <begin position="436"/>
        <end position="439"/>
    </location>
</feature>
<feature type="turn" evidence="4">
    <location>
        <begin position="440"/>
        <end position="442"/>
    </location>
</feature>
<feature type="strand" evidence="4">
    <location>
        <begin position="443"/>
        <end position="445"/>
    </location>
</feature>
<feature type="helix" evidence="4">
    <location>
        <begin position="464"/>
        <end position="466"/>
    </location>
</feature>
<feature type="turn" evidence="4">
    <location>
        <begin position="480"/>
        <end position="484"/>
    </location>
</feature>
<feature type="strand" evidence="4">
    <location>
        <begin position="485"/>
        <end position="488"/>
    </location>
</feature>
<feature type="helix" evidence="4">
    <location>
        <begin position="499"/>
        <end position="515"/>
    </location>
</feature>
<feature type="helix" evidence="4">
    <location>
        <begin position="518"/>
        <end position="520"/>
    </location>
</feature>
<feature type="strand" evidence="4">
    <location>
        <begin position="525"/>
        <end position="532"/>
    </location>
</feature>
<feature type="strand" evidence="4">
    <location>
        <begin position="535"/>
        <end position="540"/>
    </location>
</feature>
<feature type="helix" evidence="4">
    <location>
        <begin position="542"/>
        <end position="544"/>
    </location>
</feature>
<feature type="helix" evidence="4">
    <location>
        <begin position="546"/>
        <end position="556"/>
    </location>
</feature>
<feature type="turn" evidence="4">
    <location>
        <begin position="557"/>
        <end position="561"/>
    </location>
</feature>
<feature type="strand" evidence="4">
    <location>
        <begin position="567"/>
        <end position="571"/>
    </location>
</feature>
<feature type="strand" evidence="4">
    <location>
        <begin position="573"/>
        <end position="575"/>
    </location>
</feature>
<feature type="strand" evidence="4">
    <location>
        <begin position="577"/>
        <end position="581"/>
    </location>
</feature>
<feature type="strand" evidence="4">
    <location>
        <begin position="587"/>
        <end position="595"/>
    </location>
</feature>
<feature type="turn" evidence="4">
    <location>
        <begin position="600"/>
        <end position="603"/>
    </location>
</feature>
<feature type="helix" evidence="4">
    <location>
        <begin position="605"/>
        <end position="609"/>
    </location>
</feature>
<feature type="turn" evidence="4">
    <location>
        <begin position="610"/>
        <end position="613"/>
    </location>
</feature>
<feature type="helix" evidence="4">
    <location>
        <begin position="616"/>
        <end position="622"/>
    </location>
</feature>
<feature type="strand" evidence="4">
    <location>
        <begin position="626"/>
        <end position="631"/>
    </location>
</feature>
<feature type="helix" evidence="4">
    <location>
        <begin position="632"/>
        <end position="636"/>
    </location>
</feature>
<feature type="strand" evidence="4">
    <location>
        <begin position="640"/>
        <end position="642"/>
    </location>
</feature>
<feature type="helix" evidence="4">
    <location>
        <begin position="644"/>
        <end position="648"/>
    </location>
</feature>
<feature type="turn" evidence="4">
    <location>
        <begin position="652"/>
        <end position="656"/>
    </location>
</feature>
<feature type="strand" evidence="4">
    <location>
        <begin position="659"/>
        <end position="661"/>
    </location>
</feature>
<feature type="helix" evidence="4">
    <location>
        <begin position="665"/>
        <end position="668"/>
    </location>
</feature>
<feature type="turn" evidence="4">
    <location>
        <begin position="673"/>
        <end position="675"/>
    </location>
</feature>
<feature type="helix" evidence="4">
    <location>
        <begin position="679"/>
        <end position="681"/>
    </location>
</feature>
<feature type="helix" evidence="4">
    <location>
        <begin position="684"/>
        <end position="694"/>
    </location>
</feature>
<feature type="turn" evidence="4">
    <location>
        <begin position="705"/>
        <end position="707"/>
    </location>
</feature>
<feature type="strand" evidence="4">
    <location>
        <begin position="712"/>
        <end position="717"/>
    </location>
</feature>
<feature type="strand" evidence="4">
    <location>
        <begin position="722"/>
        <end position="724"/>
    </location>
</feature>
<feature type="helix" evidence="4">
    <location>
        <begin position="727"/>
        <end position="730"/>
    </location>
</feature>
<feature type="turn" evidence="4">
    <location>
        <begin position="731"/>
        <end position="735"/>
    </location>
</feature>
<feature type="strand" evidence="4">
    <location>
        <begin position="740"/>
        <end position="747"/>
    </location>
</feature>
<feature type="turn" evidence="4">
    <location>
        <begin position="750"/>
        <end position="756"/>
    </location>
</feature>
<feature type="strand" evidence="4">
    <location>
        <begin position="757"/>
        <end position="761"/>
    </location>
</feature>
<feature type="helix" evidence="4">
    <location>
        <begin position="762"/>
        <end position="766"/>
    </location>
</feature>
<feature type="turn" evidence="4">
    <location>
        <begin position="767"/>
        <end position="770"/>
    </location>
</feature>
<feature type="strand" evidence="4">
    <location>
        <begin position="772"/>
        <end position="783"/>
    </location>
</feature>
<feature type="helix" evidence="4">
    <location>
        <begin position="784"/>
        <end position="787"/>
    </location>
</feature>
<feature type="strand" evidence="4">
    <location>
        <begin position="805"/>
        <end position="807"/>
    </location>
</feature>
<feature type="strand" evidence="4">
    <location>
        <begin position="818"/>
        <end position="820"/>
    </location>
</feature>
<feature type="strand" evidence="4">
    <location>
        <begin position="852"/>
        <end position="875"/>
    </location>
</feature>
<feature type="strand" evidence="4">
    <location>
        <begin position="882"/>
        <end position="884"/>
    </location>
</feature>
<feature type="strand" evidence="4">
    <location>
        <begin position="891"/>
        <end position="897"/>
    </location>
</feature>
<feature type="helix" evidence="4">
    <location>
        <begin position="899"/>
        <end position="901"/>
    </location>
</feature>
<feature type="strand" evidence="4">
    <location>
        <begin position="912"/>
        <end position="915"/>
    </location>
</feature>
<feature type="helix" evidence="4">
    <location>
        <begin position="918"/>
        <end position="922"/>
    </location>
</feature>
<feature type="helix" evidence="4">
    <location>
        <begin position="927"/>
        <end position="940"/>
    </location>
</feature>
<feature type="strand" evidence="4">
    <location>
        <begin position="947"/>
        <end position="949"/>
    </location>
</feature>
<feature type="helix" evidence="4">
    <location>
        <begin position="962"/>
        <end position="976"/>
    </location>
</feature>
<feature type="helix" evidence="4">
    <location>
        <begin position="982"/>
        <end position="989"/>
    </location>
</feature>
<feature type="turn" evidence="4">
    <location>
        <begin position="998"/>
        <end position="1000"/>
    </location>
</feature>
<feature type="strand" evidence="4">
    <location>
        <begin position="1008"/>
        <end position="1019"/>
    </location>
</feature>
<feature type="strand" evidence="4">
    <location>
        <begin position="1027"/>
        <end position="1031"/>
    </location>
</feature>
<feature type="strand" evidence="4">
    <location>
        <begin position="1036"/>
        <end position="1038"/>
    </location>
</feature>
<feature type="turn" evidence="4">
    <location>
        <begin position="1045"/>
        <end position="1048"/>
    </location>
</feature>
<feature type="strand" evidence="4">
    <location>
        <begin position="1051"/>
        <end position="1053"/>
    </location>
</feature>
<feature type="helix" evidence="4">
    <location>
        <begin position="1055"/>
        <end position="1064"/>
    </location>
</feature>
<feature type="helix" evidence="4">
    <location>
        <begin position="1067"/>
        <end position="1074"/>
    </location>
</feature>
<feature type="strand" evidence="4">
    <location>
        <begin position="1084"/>
        <end position="1086"/>
    </location>
</feature>
<feature type="strand" evidence="4">
    <location>
        <begin position="1088"/>
        <end position="1090"/>
    </location>
</feature>
<feature type="strand" evidence="4">
    <location>
        <begin position="1095"/>
        <end position="1102"/>
    </location>
</feature>
<feature type="helix" evidence="4">
    <location>
        <begin position="1104"/>
        <end position="1108"/>
    </location>
</feature>
<feature type="strand" evidence="4">
    <location>
        <begin position="1116"/>
        <end position="1118"/>
    </location>
</feature>
<feature type="helix" evidence="4">
    <location>
        <begin position="1122"/>
        <end position="1132"/>
    </location>
</feature>
<feature type="turn" evidence="4">
    <location>
        <begin position="1133"/>
        <end position="1135"/>
    </location>
</feature>
<feature type="strand" evidence="4">
    <location>
        <begin position="1136"/>
        <end position="1143"/>
    </location>
</feature>
<proteinExistence type="evidence at protein level"/>
<keyword id="KW-0002">3D-structure</keyword>
<keyword id="KW-0240">DNA-directed RNA polymerase</keyword>
<keyword id="KW-0479">Metal-binding</keyword>
<keyword id="KW-0548">Nucleotidyltransferase</keyword>
<keyword id="KW-0597">Phosphoprotein</keyword>
<keyword id="KW-1185">Reference proteome</keyword>
<keyword id="KW-0804">Transcription</keyword>
<keyword id="KW-0808">Transferase</keyword>
<keyword id="KW-0946">Virion</keyword>
<protein>
    <recommendedName>
        <fullName>DNA-directed RNA polymerase 133 kDa polypeptide</fullName>
        <ecNumber>2.7.7.6</ecNumber>
    </recommendedName>
</protein>
<accession>Q76ZP7</accession>
<accession>P19798</accession>
<reference key="1">
    <citation type="journal article" date="1991" name="Virology">
        <title>Identification, sequence, and expression of the gene encoding the second-largest subunit of the vaccinia virus DNA-dependent RNA polymerase.</title>
        <authorList>
            <person name="Amegadzie B.Y."/>
            <person name="Holmes M.H."/>
            <person name="Cole N.B."/>
            <person name="Jones E.V."/>
            <person name="Earl P.L."/>
            <person name="Moss B."/>
        </authorList>
    </citation>
    <scope>NUCLEOTIDE SEQUENCE [GENOMIC DNA]</scope>
</reference>
<reference key="2">
    <citation type="submission" date="2003-02" db="EMBL/GenBank/DDBJ databases">
        <title>Sequencing of the coding region of Vaccinia-WR to an average 9-fold redundancy and an error rate of 0.16/10kb.</title>
        <authorList>
            <person name="Esposito J.J."/>
            <person name="Frace A.M."/>
            <person name="Sammons S.A."/>
            <person name="Olsen-Rasmussen M."/>
            <person name="Osborne J."/>
            <person name="Wohlhueter R."/>
        </authorList>
    </citation>
    <scope>NUCLEOTIDE SEQUENCE [LARGE SCALE GENOMIC DNA]</scope>
</reference>
<reference key="3">
    <citation type="journal article" date="2006" name="Virol. J.">
        <title>Pox proteomics: mass spectrometry analysis and identification of Vaccinia virion proteins.</title>
        <authorList>
            <person name="Yoder J.D."/>
            <person name="Chen T.S."/>
            <person name="Gagnier C.R."/>
            <person name="Vemulapalli S."/>
            <person name="Maier C.S."/>
            <person name="Hruby D.E."/>
        </authorList>
    </citation>
    <scope>IDENTIFICATION BY MASS SPECTROMETRY</scope>
</reference>
<reference key="4">
    <citation type="journal article" date="2003" name="J. Gen. Virol.">
        <title>Vaccinia virus transcription.</title>
        <authorList>
            <person name="Broyles S.S."/>
        </authorList>
    </citation>
    <scope>REVIEW</scope>
</reference>
<reference evidence="3" key="5">
    <citation type="journal article" date="2019" name="Cell">
        <title>Structural Basis of Poxvirus Transcription: Transcribing and Capping Vaccinia Complexes.</title>
        <authorList>
            <person name="Hillen H.S."/>
            <person name="Bartuli J."/>
            <person name="Grimm C."/>
            <person name="Dienemann C."/>
            <person name="Bedenk K."/>
            <person name="Szalay A.A."/>
            <person name="Fischer U."/>
            <person name="Cramer P."/>
        </authorList>
    </citation>
    <scope>STRUCTURE BY ELECTRON MICROSCOPY (3.10 ANGSTROMS) IN COMPLEX WITH OPG66; OPG90; OPG103; OPG105; OPG119; OPG131 AND OPG156</scope>
    <scope>FUNCTION</scope>
</reference>